<keyword id="KW-0025">Alternative splicing</keyword>
<keyword id="KW-0175">Coiled coil</keyword>
<keyword id="KW-0653">Protein transport</keyword>
<keyword id="KW-1267">Proteomics identification</keyword>
<keyword id="KW-1185">Reference proteome</keyword>
<keyword id="KW-0813">Transport</keyword>
<protein>
    <recommendedName>
        <fullName>Nucleoporin-62 C-terminal-like protein</fullName>
    </recommendedName>
</protein>
<reference key="1">
    <citation type="journal article" date="2004" name="Nat. Genet.">
        <title>Complete sequencing and characterization of 21,243 full-length human cDNAs.</title>
        <authorList>
            <person name="Ota T."/>
            <person name="Suzuki Y."/>
            <person name="Nishikawa T."/>
            <person name="Otsuki T."/>
            <person name="Sugiyama T."/>
            <person name="Irie R."/>
            <person name="Wakamatsu A."/>
            <person name="Hayashi K."/>
            <person name="Sato H."/>
            <person name="Nagai K."/>
            <person name="Kimura K."/>
            <person name="Makita H."/>
            <person name="Sekine M."/>
            <person name="Obayashi M."/>
            <person name="Nishi T."/>
            <person name="Shibahara T."/>
            <person name="Tanaka T."/>
            <person name="Ishii S."/>
            <person name="Yamamoto J."/>
            <person name="Saito K."/>
            <person name="Kawai Y."/>
            <person name="Isono Y."/>
            <person name="Nakamura Y."/>
            <person name="Nagahari K."/>
            <person name="Murakami K."/>
            <person name="Yasuda T."/>
            <person name="Iwayanagi T."/>
            <person name="Wagatsuma M."/>
            <person name="Shiratori A."/>
            <person name="Sudo H."/>
            <person name="Hosoiri T."/>
            <person name="Kaku Y."/>
            <person name="Kodaira H."/>
            <person name="Kondo H."/>
            <person name="Sugawara M."/>
            <person name="Takahashi M."/>
            <person name="Kanda K."/>
            <person name="Yokoi T."/>
            <person name="Furuya T."/>
            <person name="Kikkawa E."/>
            <person name="Omura Y."/>
            <person name="Abe K."/>
            <person name="Kamihara K."/>
            <person name="Katsuta N."/>
            <person name="Sato K."/>
            <person name="Tanikawa M."/>
            <person name="Yamazaki M."/>
            <person name="Ninomiya K."/>
            <person name="Ishibashi T."/>
            <person name="Yamashita H."/>
            <person name="Murakawa K."/>
            <person name="Fujimori K."/>
            <person name="Tanai H."/>
            <person name="Kimata M."/>
            <person name="Watanabe M."/>
            <person name="Hiraoka S."/>
            <person name="Chiba Y."/>
            <person name="Ishida S."/>
            <person name="Ono Y."/>
            <person name="Takiguchi S."/>
            <person name="Watanabe S."/>
            <person name="Yosida M."/>
            <person name="Hotuta T."/>
            <person name="Kusano J."/>
            <person name="Kanehori K."/>
            <person name="Takahashi-Fujii A."/>
            <person name="Hara H."/>
            <person name="Tanase T.-O."/>
            <person name="Nomura Y."/>
            <person name="Togiya S."/>
            <person name="Komai F."/>
            <person name="Hara R."/>
            <person name="Takeuchi K."/>
            <person name="Arita M."/>
            <person name="Imose N."/>
            <person name="Musashino K."/>
            <person name="Yuuki H."/>
            <person name="Oshima A."/>
            <person name="Sasaki N."/>
            <person name="Aotsuka S."/>
            <person name="Yoshikawa Y."/>
            <person name="Matsunawa H."/>
            <person name="Ichihara T."/>
            <person name="Shiohata N."/>
            <person name="Sano S."/>
            <person name="Moriya S."/>
            <person name="Momiyama H."/>
            <person name="Satoh N."/>
            <person name="Takami S."/>
            <person name="Terashima Y."/>
            <person name="Suzuki O."/>
            <person name="Nakagawa S."/>
            <person name="Senoh A."/>
            <person name="Mizoguchi H."/>
            <person name="Goto Y."/>
            <person name="Shimizu F."/>
            <person name="Wakebe H."/>
            <person name="Hishigaki H."/>
            <person name="Watanabe T."/>
            <person name="Sugiyama A."/>
            <person name="Takemoto M."/>
            <person name="Kawakami B."/>
            <person name="Yamazaki M."/>
            <person name="Watanabe K."/>
            <person name="Kumagai A."/>
            <person name="Itakura S."/>
            <person name="Fukuzumi Y."/>
            <person name="Fujimori Y."/>
            <person name="Komiyama M."/>
            <person name="Tashiro H."/>
            <person name="Tanigami A."/>
            <person name="Fujiwara T."/>
            <person name="Ono T."/>
            <person name="Yamada K."/>
            <person name="Fujii Y."/>
            <person name="Ozaki K."/>
            <person name="Hirao M."/>
            <person name="Ohmori Y."/>
            <person name="Kawabata A."/>
            <person name="Hikiji T."/>
            <person name="Kobatake N."/>
            <person name="Inagaki H."/>
            <person name="Ikema Y."/>
            <person name="Okamoto S."/>
            <person name="Okitani R."/>
            <person name="Kawakami T."/>
            <person name="Noguchi S."/>
            <person name="Itoh T."/>
            <person name="Shigeta K."/>
            <person name="Senba T."/>
            <person name="Matsumura K."/>
            <person name="Nakajima Y."/>
            <person name="Mizuno T."/>
            <person name="Morinaga M."/>
            <person name="Sasaki M."/>
            <person name="Togashi T."/>
            <person name="Oyama M."/>
            <person name="Hata H."/>
            <person name="Watanabe M."/>
            <person name="Komatsu T."/>
            <person name="Mizushima-Sugano J."/>
            <person name="Satoh T."/>
            <person name="Shirai Y."/>
            <person name="Takahashi Y."/>
            <person name="Nakagawa K."/>
            <person name="Okumura K."/>
            <person name="Nagase T."/>
            <person name="Nomura N."/>
            <person name="Kikuchi H."/>
            <person name="Masuho Y."/>
            <person name="Yamashita R."/>
            <person name="Nakai K."/>
            <person name="Yada T."/>
            <person name="Nakamura Y."/>
            <person name="Ohara O."/>
            <person name="Isogai T."/>
            <person name="Sugano S."/>
        </authorList>
    </citation>
    <scope>NUCLEOTIDE SEQUENCE [LARGE SCALE MRNA] (ISOFORM 1)</scope>
    <scope>VARIANT THR-177</scope>
    <source>
        <tissue>Colon</tissue>
    </source>
</reference>
<reference key="2">
    <citation type="journal article" date="2005" name="Nature">
        <title>The DNA sequence of the human X chromosome.</title>
        <authorList>
            <person name="Ross M.T."/>
            <person name="Grafham D.V."/>
            <person name="Coffey A.J."/>
            <person name="Scherer S."/>
            <person name="McLay K."/>
            <person name="Muzny D."/>
            <person name="Platzer M."/>
            <person name="Howell G.R."/>
            <person name="Burrows C."/>
            <person name="Bird C.P."/>
            <person name="Frankish A."/>
            <person name="Lovell F.L."/>
            <person name="Howe K.L."/>
            <person name="Ashurst J.L."/>
            <person name="Fulton R.S."/>
            <person name="Sudbrak R."/>
            <person name="Wen G."/>
            <person name="Jones M.C."/>
            <person name="Hurles M.E."/>
            <person name="Andrews T.D."/>
            <person name="Scott C.E."/>
            <person name="Searle S."/>
            <person name="Ramser J."/>
            <person name="Whittaker A."/>
            <person name="Deadman R."/>
            <person name="Carter N.P."/>
            <person name="Hunt S.E."/>
            <person name="Chen R."/>
            <person name="Cree A."/>
            <person name="Gunaratne P."/>
            <person name="Havlak P."/>
            <person name="Hodgson A."/>
            <person name="Metzker M.L."/>
            <person name="Richards S."/>
            <person name="Scott G."/>
            <person name="Steffen D."/>
            <person name="Sodergren E."/>
            <person name="Wheeler D.A."/>
            <person name="Worley K.C."/>
            <person name="Ainscough R."/>
            <person name="Ambrose K.D."/>
            <person name="Ansari-Lari M.A."/>
            <person name="Aradhya S."/>
            <person name="Ashwell R.I."/>
            <person name="Babbage A.K."/>
            <person name="Bagguley C.L."/>
            <person name="Ballabio A."/>
            <person name="Banerjee R."/>
            <person name="Barker G.E."/>
            <person name="Barlow K.F."/>
            <person name="Barrett I.P."/>
            <person name="Bates K.N."/>
            <person name="Beare D.M."/>
            <person name="Beasley H."/>
            <person name="Beasley O."/>
            <person name="Beck A."/>
            <person name="Bethel G."/>
            <person name="Blechschmidt K."/>
            <person name="Brady N."/>
            <person name="Bray-Allen S."/>
            <person name="Bridgeman A.M."/>
            <person name="Brown A.J."/>
            <person name="Brown M.J."/>
            <person name="Bonnin D."/>
            <person name="Bruford E.A."/>
            <person name="Buhay C."/>
            <person name="Burch P."/>
            <person name="Burford D."/>
            <person name="Burgess J."/>
            <person name="Burrill W."/>
            <person name="Burton J."/>
            <person name="Bye J.M."/>
            <person name="Carder C."/>
            <person name="Carrel L."/>
            <person name="Chako J."/>
            <person name="Chapman J.C."/>
            <person name="Chavez D."/>
            <person name="Chen E."/>
            <person name="Chen G."/>
            <person name="Chen Y."/>
            <person name="Chen Z."/>
            <person name="Chinault C."/>
            <person name="Ciccodicola A."/>
            <person name="Clark S.Y."/>
            <person name="Clarke G."/>
            <person name="Clee C.M."/>
            <person name="Clegg S."/>
            <person name="Clerc-Blankenburg K."/>
            <person name="Clifford K."/>
            <person name="Cobley V."/>
            <person name="Cole C.G."/>
            <person name="Conquer J.S."/>
            <person name="Corby N."/>
            <person name="Connor R.E."/>
            <person name="David R."/>
            <person name="Davies J."/>
            <person name="Davis C."/>
            <person name="Davis J."/>
            <person name="Delgado O."/>
            <person name="Deshazo D."/>
            <person name="Dhami P."/>
            <person name="Ding Y."/>
            <person name="Dinh H."/>
            <person name="Dodsworth S."/>
            <person name="Draper H."/>
            <person name="Dugan-Rocha S."/>
            <person name="Dunham A."/>
            <person name="Dunn M."/>
            <person name="Durbin K.J."/>
            <person name="Dutta I."/>
            <person name="Eades T."/>
            <person name="Ellwood M."/>
            <person name="Emery-Cohen A."/>
            <person name="Errington H."/>
            <person name="Evans K.L."/>
            <person name="Faulkner L."/>
            <person name="Francis F."/>
            <person name="Frankland J."/>
            <person name="Fraser A.E."/>
            <person name="Galgoczy P."/>
            <person name="Gilbert J."/>
            <person name="Gill R."/>
            <person name="Gloeckner G."/>
            <person name="Gregory S.G."/>
            <person name="Gribble S."/>
            <person name="Griffiths C."/>
            <person name="Grocock R."/>
            <person name="Gu Y."/>
            <person name="Gwilliam R."/>
            <person name="Hamilton C."/>
            <person name="Hart E.A."/>
            <person name="Hawes A."/>
            <person name="Heath P.D."/>
            <person name="Heitmann K."/>
            <person name="Hennig S."/>
            <person name="Hernandez J."/>
            <person name="Hinzmann B."/>
            <person name="Ho S."/>
            <person name="Hoffs M."/>
            <person name="Howden P.J."/>
            <person name="Huckle E.J."/>
            <person name="Hume J."/>
            <person name="Hunt P.J."/>
            <person name="Hunt A.R."/>
            <person name="Isherwood J."/>
            <person name="Jacob L."/>
            <person name="Johnson D."/>
            <person name="Jones S."/>
            <person name="de Jong P.J."/>
            <person name="Joseph S.S."/>
            <person name="Keenan S."/>
            <person name="Kelly S."/>
            <person name="Kershaw J.K."/>
            <person name="Khan Z."/>
            <person name="Kioschis P."/>
            <person name="Klages S."/>
            <person name="Knights A.J."/>
            <person name="Kosiura A."/>
            <person name="Kovar-Smith C."/>
            <person name="Laird G.K."/>
            <person name="Langford C."/>
            <person name="Lawlor S."/>
            <person name="Leversha M."/>
            <person name="Lewis L."/>
            <person name="Liu W."/>
            <person name="Lloyd C."/>
            <person name="Lloyd D.M."/>
            <person name="Loulseged H."/>
            <person name="Loveland J.E."/>
            <person name="Lovell J.D."/>
            <person name="Lozado R."/>
            <person name="Lu J."/>
            <person name="Lyne R."/>
            <person name="Ma J."/>
            <person name="Maheshwari M."/>
            <person name="Matthews L.H."/>
            <person name="McDowall J."/>
            <person name="McLaren S."/>
            <person name="McMurray A."/>
            <person name="Meidl P."/>
            <person name="Meitinger T."/>
            <person name="Milne S."/>
            <person name="Miner G."/>
            <person name="Mistry S.L."/>
            <person name="Morgan M."/>
            <person name="Morris S."/>
            <person name="Mueller I."/>
            <person name="Mullikin J.C."/>
            <person name="Nguyen N."/>
            <person name="Nordsiek G."/>
            <person name="Nyakatura G."/>
            <person name="O'dell C.N."/>
            <person name="Okwuonu G."/>
            <person name="Palmer S."/>
            <person name="Pandian R."/>
            <person name="Parker D."/>
            <person name="Parrish J."/>
            <person name="Pasternak S."/>
            <person name="Patel D."/>
            <person name="Pearce A.V."/>
            <person name="Pearson D.M."/>
            <person name="Pelan S.E."/>
            <person name="Perez L."/>
            <person name="Porter K.M."/>
            <person name="Ramsey Y."/>
            <person name="Reichwald K."/>
            <person name="Rhodes S."/>
            <person name="Ridler K.A."/>
            <person name="Schlessinger D."/>
            <person name="Schueler M.G."/>
            <person name="Sehra H.K."/>
            <person name="Shaw-Smith C."/>
            <person name="Shen H."/>
            <person name="Sheridan E.M."/>
            <person name="Shownkeen R."/>
            <person name="Skuce C.D."/>
            <person name="Smith M.L."/>
            <person name="Sotheran E.C."/>
            <person name="Steingruber H.E."/>
            <person name="Steward C.A."/>
            <person name="Storey R."/>
            <person name="Swann R.M."/>
            <person name="Swarbreck D."/>
            <person name="Tabor P.E."/>
            <person name="Taudien S."/>
            <person name="Taylor T."/>
            <person name="Teague B."/>
            <person name="Thomas K."/>
            <person name="Thorpe A."/>
            <person name="Timms K."/>
            <person name="Tracey A."/>
            <person name="Trevanion S."/>
            <person name="Tromans A.C."/>
            <person name="d'Urso M."/>
            <person name="Verduzco D."/>
            <person name="Villasana D."/>
            <person name="Waldron L."/>
            <person name="Wall M."/>
            <person name="Wang Q."/>
            <person name="Warren J."/>
            <person name="Warry G.L."/>
            <person name="Wei X."/>
            <person name="West A."/>
            <person name="Whitehead S.L."/>
            <person name="Whiteley M.N."/>
            <person name="Wilkinson J.E."/>
            <person name="Willey D.L."/>
            <person name="Williams G."/>
            <person name="Williams L."/>
            <person name="Williamson A."/>
            <person name="Williamson H."/>
            <person name="Wilming L."/>
            <person name="Woodmansey R.L."/>
            <person name="Wray P.W."/>
            <person name="Yen J."/>
            <person name="Zhang J."/>
            <person name="Zhou J."/>
            <person name="Zoghbi H."/>
            <person name="Zorilla S."/>
            <person name="Buck D."/>
            <person name="Reinhardt R."/>
            <person name="Poustka A."/>
            <person name="Rosenthal A."/>
            <person name="Lehrach H."/>
            <person name="Meindl A."/>
            <person name="Minx P.J."/>
            <person name="Hillier L.W."/>
            <person name="Willard H.F."/>
            <person name="Wilson R.K."/>
            <person name="Waterston R.H."/>
            <person name="Rice C.M."/>
            <person name="Vaudin M."/>
            <person name="Coulson A."/>
            <person name="Nelson D.L."/>
            <person name="Weinstock G."/>
            <person name="Sulston J.E."/>
            <person name="Durbin R.M."/>
            <person name="Hubbard T."/>
            <person name="Gibbs R.A."/>
            <person name="Beck S."/>
            <person name="Rogers J."/>
            <person name="Bentley D.R."/>
        </authorList>
    </citation>
    <scope>NUCLEOTIDE SEQUENCE [LARGE SCALE GENOMIC DNA]</scope>
</reference>
<reference key="3">
    <citation type="submission" date="2005-09" db="EMBL/GenBank/DDBJ databases">
        <authorList>
            <person name="Mural R.J."/>
            <person name="Istrail S."/>
            <person name="Sutton G.G."/>
            <person name="Florea L."/>
            <person name="Halpern A.L."/>
            <person name="Mobarry C.M."/>
            <person name="Lippert R."/>
            <person name="Walenz B."/>
            <person name="Shatkay H."/>
            <person name="Dew I."/>
            <person name="Miller J.R."/>
            <person name="Flanigan M.J."/>
            <person name="Edwards N.J."/>
            <person name="Bolanos R."/>
            <person name="Fasulo D."/>
            <person name="Halldorsson B.V."/>
            <person name="Hannenhalli S."/>
            <person name="Turner R."/>
            <person name="Yooseph S."/>
            <person name="Lu F."/>
            <person name="Nusskern D.R."/>
            <person name="Shue B.C."/>
            <person name="Zheng X.H."/>
            <person name="Zhong F."/>
            <person name="Delcher A.L."/>
            <person name="Huson D.H."/>
            <person name="Kravitz S.A."/>
            <person name="Mouchard L."/>
            <person name="Reinert K."/>
            <person name="Remington K.A."/>
            <person name="Clark A.G."/>
            <person name="Waterman M.S."/>
            <person name="Eichler E.E."/>
            <person name="Adams M.D."/>
            <person name="Hunkapiller M.W."/>
            <person name="Myers E.W."/>
            <person name="Venter J.C."/>
        </authorList>
    </citation>
    <scope>NUCLEOTIDE SEQUENCE [LARGE SCALE GENOMIC DNA]</scope>
    <scope>VARIANT THR-177</scope>
</reference>
<reference key="4">
    <citation type="journal article" date="2004" name="Genome Res.">
        <title>The status, quality, and expansion of the NIH full-length cDNA project: the Mammalian Gene Collection (MGC).</title>
        <authorList>
            <consortium name="The MGC Project Team"/>
        </authorList>
    </citation>
    <scope>NUCLEOTIDE SEQUENCE [LARGE SCALE MRNA] (ISOFORMS 1 AND 2)</scope>
    <source>
        <tissue>Bone marrow</tissue>
        <tissue>Lung</tissue>
    </source>
</reference>
<gene>
    <name type="primary">NUP62CL</name>
    <name type="synonym">NUP62L</name>
</gene>
<proteinExistence type="evidence at protein level"/>
<evidence type="ECO:0000255" key="1"/>
<evidence type="ECO:0000269" key="2">
    <source>
    </source>
</evidence>
<evidence type="ECO:0000269" key="3">
    <source ref="3"/>
</evidence>
<evidence type="ECO:0000303" key="4">
    <source>
    </source>
</evidence>
<evidence type="ECO:0000305" key="5"/>
<name>N62CL_HUMAN</name>
<comment type="interaction">
    <interactant intactId="EBI-751933">
        <id>Q9H1M0</id>
    </interactant>
    <interactant intactId="EBI-712648">
        <id>O95994</id>
        <label>AGR2</label>
    </interactant>
    <organismsDiffer>false</organismsDiffer>
    <experiments>6</experiments>
</comment>
<comment type="interaction">
    <interactant intactId="EBI-751933">
        <id>Q9H1M0</id>
    </interactant>
    <interactant intactId="EBI-741048">
        <id>Q7Z3B4</id>
        <label>NUP54</label>
    </interactant>
    <organismsDiffer>false</organismsDiffer>
    <experiments>4</experiments>
</comment>
<comment type="interaction">
    <interactant intactId="EBI-751933">
        <id>Q9H1M0</id>
    </interactant>
    <interactant intactId="EBI-539828">
        <id>O15294</id>
        <label>OGT</label>
    </interactant>
    <organismsDiffer>false</organismsDiffer>
    <experiments>7</experiments>
</comment>
<comment type="interaction">
    <interactant intactId="EBI-751933">
        <id>Q9H1M0</id>
    </interactant>
    <interactant intactId="EBI-11536584">
        <id>O15294-3</id>
        <label>OGT</label>
    </interactant>
    <organismsDiffer>false</organismsDiffer>
    <experiments>3</experiments>
</comment>
<comment type="interaction">
    <interactant intactId="EBI-751933">
        <id>Q9H1M0</id>
    </interactant>
    <interactant intactId="EBI-12029004">
        <id>P78424</id>
        <label>POU6F2</label>
    </interactant>
    <organismsDiffer>false</organismsDiffer>
    <experiments>3</experiments>
</comment>
<comment type="interaction">
    <interactant intactId="EBI-751933">
        <id>Q9H1M0</id>
    </interactant>
    <interactant intactId="EBI-296723">
        <id>O95295</id>
        <label>SNAPIN</label>
    </interactant>
    <organismsDiffer>false</organismsDiffer>
    <experiments>3</experiments>
</comment>
<comment type="alternative products">
    <event type="alternative splicing"/>
    <isoform>
        <id>Q9H1M0-1</id>
        <name>1</name>
        <sequence type="displayed"/>
    </isoform>
    <isoform>
        <id>Q9H1M0-2</id>
        <name>2</name>
        <sequence type="described" ref="VSP_021367 VSP_021368"/>
    </isoform>
</comment>
<comment type="similarity">
    <text evidence="5">Belongs to the nucleoporin NSP1/NUP62 family.</text>
</comment>
<sequence length="184" mass="20837">MQFTSISNSLTSTAAIGLSFTTSTTTTATFTTNTTTTITSGFTVNQNQLLSRGFENLVPYTSTVSVVATPVMTYGHLEGLINEWNLELEDQEKYFLLQATQVNAWDHTLIENGEMIRILHGEVNKVKLDQKRLEQELDFILSQQQELEFLLTYLEESTRDQSGLHYLQDADEEHVEISTRSAEF</sequence>
<dbReference type="EMBL" id="AK000137">
    <property type="protein sequence ID" value="BAA90968.1"/>
    <property type="molecule type" value="mRNA"/>
</dbReference>
<dbReference type="EMBL" id="AL390039">
    <property type="status" value="NOT_ANNOTATED_CDS"/>
    <property type="molecule type" value="Genomic_DNA"/>
</dbReference>
<dbReference type="EMBL" id="CH471120">
    <property type="protein sequence ID" value="EAX02718.1"/>
    <property type="molecule type" value="Genomic_DNA"/>
</dbReference>
<dbReference type="EMBL" id="CH471120">
    <property type="protein sequence ID" value="EAX02720.1"/>
    <property type="molecule type" value="Genomic_DNA"/>
</dbReference>
<dbReference type="EMBL" id="BC016327">
    <property type="protein sequence ID" value="AAH16327.1"/>
    <property type="molecule type" value="mRNA"/>
</dbReference>
<dbReference type="EMBL" id="BC017799">
    <property type="protein sequence ID" value="AAH17799.1"/>
    <property type="molecule type" value="mRNA"/>
</dbReference>
<dbReference type="CCDS" id="CCDS14527.1">
    <molecule id="Q9H1M0-1"/>
</dbReference>
<dbReference type="RefSeq" id="NP_060151.2">
    <molecule id="Q9H1M0-1"/>
    <property type="nucleotide sequence ID" value="NM_017681.3"/>
</dbReference>
<dbReference type="SMR" id="Q9H1M0"/>
<dbReference type="BioGRID" id="120184">
    <property type="interactions" value="37"/>
</dbReference>
<dbReference type="FunCoup" id="Q9H1M0">
    <property type="interactions" value="17"/>
</dbReference>
<dbReference type="IntAct" id="Q9H1M0">
    <property type="interactions" value="32"/>
</dbReference>
<dbReference type="MINT" id="Q9H1M0"/>
<dbReference type="STRING" id="9606.ENSP00000361544"/>
<dbReference type="iPTMnet" id="Q9H1M0"/>
<dbReference type="PhosphoSitePlus" id="Q9H1M0"/>
<dbReference type="BioMuta" id="NUP62CL"/>
<dbReference type="DMDM" id="317373409"/>
<dbReference type="MassIVE" id="Q9H1M0"/>
<dbReference type="PaxDb" id="9606-ENSP00000361544"/>
<dbReference type="PeptideAtlas" id="Q9H1M0"/>
<dbReference type="ProteomicsDB" id="80427">
    <molecule id="Q9H1M0-1"/>
</dbReference>
<dbReference type="Pumba" id="Q9H1M0"/>
<dbReference type="Antibodypedia" id="477">
    <property type="antibodies" value="30 antibodies from 13 providers"/>
</dbReference>
<dbReference type="DNASU" id="54830"/>
<dbReference type="Ensembl" id="ENST00000372466.8">
    <molecule id="Q9H1M0-1"/>
    <property type="protein sequence ID" value="ENSP00000361544.4"/>
    <property type="gene ID" value="ENSG00000198088.10"/>
</dbReference>
<dbReference type="Ensembl" id="ENST00000484614.5">
    <molecule id="Q9H1M0-2"/>
    <property type="protein sequence ID" value="ENSP00000433269.1"/>
    <property type="gene ID" value="ENSG00000198088.10"/>
</dbReference>
<dbReference type="GeneID" id="54830"/>
<dbReference type="KEGG" id="hsa:54830"/>
<dbReference type="MANE-Select" id="ENST00000372466.8">
    <property type="protein sequence ID" value="ENSP00000361544.4"/>
    <property type="RefSeq nucleotide sequence ID" value="NM_017681.3"/>
    <property type="RefSeq protein sequence ID" value="NP_060151.2"/>
</dbReference>
<dbReference type="UCSC" id="uc004ena.4">
    <molecule id="Q9H1M0-1"/>
    <property type="organism name" value="human"/>
</dbReference>
<dbReference type="AGR" id="HGNC:25960"/>
<dbReference type="CTD" id="54830"/>
<dbReference type="DisGeNET" id="54830"/>
<dbReference type="GeneCards" id="NUP62CL"/>
<dbReference type="HGNC" id="HGNC:25960">
    <property type="gene designation" value="NUP62CL"/>
</dbReference>
<dbReference type="HPA" id="ENSG00000198088">
    <property type="expression patterns" value="Tissue enhanced (epididymis, fallopian tube)"/>
</dbReference>
<dbReference type="neXtProt" id="NX_Q9H1M0"/>
<dbReference type="OpenTargets" id="ENSG00000198088"/>
<dbReference type="PharmGKB" id="PA145148360"/>
<dbReference type="VEuPathDB" id="HostDB:ENSG00000198088"/>
<dbReference type="eggNOG" id="KOG2196">
    <property type="taxonomic scope" value="Eukaryota"/>
</dbReference>
<dbReference type="GeneTree" id="ENSGT00940000162863"/>
<dbReference type="HOGENOM" id="CLU_2721570_0_0_1"/>
<dbReference type="InParanoid" id="Q9H1M0"/>
<dbReference type="OMA" id="PVMAYGQ"/>
<dbReference type="OrthoDB" id="344345at2759"/>
<dbReference type="PAN-GO" id="Q9H1M0">
    <property type="GO annotations" value="5 GO annotations based on evolutionary models"/>
</dbReference>
<dbReference type="PhylomeDB" id="Q9H1M0"/>
<dbReference type="PathwayCommons" id="Q9H1M0"/>
<dbReference type="SignaLink" id="Q9H1M0"/>
<dbReference type="BioGRID-ORCS" id="54830">
    <property type="hits" value="8 hits in 774 CRISPR screens"/>
</dbReference>
<dbReference type="ChiTaRS" id="NUP62CL">
    <property type="organism name" value="human"/>
</dbReference>
<dbReference type="GenomeRNAi" id="54830"/>
<dbReference type="Pharos" id="Q9H1M0">
    <property type="development level" value="Tdark"/>
</dbReference>
<dbReference type="PRO" id="PR:Q9H1M0"/>
<dbReference type="Proteomes" id="UP000005640">
    <property type="component" value="Chromosome X"/>
</dbReference>
<dbReference type="RNAct" id="Q9H1M0">
    <property type="molecule type" value="protein"/>
</dbReference>
<dbReference type="Bgee" id="ENSG00000198088">
    <property type="expression patterns" value="Expressed in right uterine tube and 123 other cell types or tissues"/>
</dbReference>
<dbReference type="ExpressionAtlas" id="Q9H1M0">
    <property type="expression patterns" value="baseline and differential"/>
</dbReference>
<dbReference type="GO" id="GO:0005643">
    <property type="term" value="C:nuclear pore"/>
    <property type="evidence" value="ECO:0007669"/>
    <property type="project" value="InterPro"/>
</dbReference>
<dbReference type="GO" id="GO:0017056">
    <property type="term" value="F:structural constituent of nuclear pore"/>
    <property type="evidence" value="ECO:0007669"/>
    <property type="project" value="InterPro"/>
</dbReference>
<dbReference type="GO" id="GO:0015031">
    <property type="term" value="P:protein transport"/>
    <property type="evidence" value="ECO:0007669"/>
    <property type="project" value="UniProtKB-KW"/>
</dbReference>
<dbReference type="FunFam" id="1.20.5.170:FF:000040">
    <property type="entry name" value="Nuclear pore glycoprotein p62"/>
    <property type="match status" value="1"/>
</dbReference>
<dbReference type="Gene3D" id="1.20.5.170">
    <property type="match status" value="1"/>
</dbReference>
<dbReference type="InterPro" id="IPR026010">
    <property type="entry name" value="NSP1/NUP62"/>
</dbReference>
<dbReference type="InterPro" id="IPR007758">
    <property type="entry name" value="Nucleoporin_NSP1_C"/>
</dbReference>
<dbReference type="PANTHER" id="PTHR12084">
    <property type="entry name" value="NUCLEAR PORE GLYCOPROTEIN P62-RELATED"/>
    <property type="match status" value="1"/>
</dbReference>
<dbReference type="PANTHER" id="PTHR12084:SF13">
    <property type="entry name" value="NUCLEOPORIN 62 C-TERMINAL LIKE"/>
    <property type="match status" value="1"/>
</dbReference>
<dbReference type="Pfam" id="PF05064">
    <property type="entry name" value="Nsp1_C"/>
    <property type="match status" value="1"/>
</dbReference>
<feature type="chain" id="PRO_0000257834" description="Nucleoporin-62 C-terminal-like protein">
    <location>
        <begin position="1"/>
        <end position="184"/>
    </location>
</feature>
<feature type="coiled-coil region" evidence="1">
    <location>
        <begin position="117"/>
        <end position="151"/>
    </location>
</feature>
<feature type="splice variant" id="VSP_021367" description="In isoform 2." evidence="4">
    <original>SVVATPVM</original>
    <variation>RFVFYMEK</variation>
    <location>
        <begin position="65"/>
        <end position="72"/>
    </location>
</feature>
<feature type="splice variant" id="VSP_021368" description="In isoform 2." evidence="4">
    <location>
        <begin position="73"/>
        <end position="184"/>
    </location>
</feature>
<feature type="sequence variant" id="VAR_050569" description="In dbSNP:rs16987290.">
    <original>F</original>
    <variation>L</variation>
    <location>
        <position position="54"/>
    </location>
</feature>
<feature type="sequence variant" id="VAR_028920" description="In dbSNP:rs1298577." evidence="2 3">
    <original>I</original>
    <variation>T</variation>
    <location>
        <position position="177"/>
    </location>
</feature>
<accession>Q9H1M0</accession>
<accession>D3DUX4</accession>
<accession>Q8WVL6</accession>
<accession>Q9NXP2</accession>
<organism>
    <name type="scientific">Homo sapiens</name>
    <name type="common">Human</name>
    <dbReference type="NCBI Taxonomy" id="9606"/>
    <lineage>
        <taxon>Eukaryota</taxon>
        <taxon>Metazoa</taxon>
        <taxon>Chordata</taxon>
        <taxon>Craniata</taxon>
        <taxon>Vertebrata</taxon>
        <taxon>Euteleostomi</taxon>
        <taxon>Mammalia</taxon>
        <taxon>Eutheria</taxon>
        <taxon>Euarchontoglires</taxon>
        <taxon>Primates</taxon>
        <taxon>Haplorrhini</taxon>
        <taxon>Catarrhini</taxon>
        <taxon>Hominidae</taxon>
        <taxon>Homo</taxon>
    </lineage>
</organism>